<feature type="chain" id="PRO_1000006963" description="Large ribosomal subunit protein bL12">
    <location>
        <begin position="1"/>
        <end position="126"/>
    </location>
</feature>
<feature type="region of interest" description="Disordered" evidence="2">
    <location>
        <begin position="107"/>
        <end position="126"/>
    </location>
</feature>
<feature type="compositionally biased region" description="Basic and acidic residues" evidence="2">
    <location>
        <begin position="107"/>
        <end position="116"/>
    </location>
</feature>
<dbReference type="EMBL" id="AP009256">
    <property type="protein sequence ID" value="BAF39066.1"/>
    <property type="molecule type" value="Genomic_DNA"/>
</dbReference>
<dbReference type="RefSeq" id="WP_003807866.1">
    <property type="nucleotide sequence ID" value="NZ_CAXVNC010000001.1"/>
</dbReference>
<dbReference type="SMR" id="A1A033"/>
<dbReference type="STRING" id="367928.BAD_0285"/>
<dbReference type="PaxDb" id="1680-BADO_0293"/>
<dbReference type="GeneID" id="4556486"/>
<dbReference type="KEGG" id="bad:BAD_0285"/>
<dbReference type="HOGENOM" id="CLU_086499_3_0_11"/>
<dbReference type="Proteomes" id="UP000008702">
    <property type="component" value="Chromosome"/>
</dbReference>
<dbReference type="GO" id="GO:0022625">
    <property type="term" value="C:cytosolic large ribosomal subunit"/>
    <property type="evidence" value="ECO:0007669"/>
    <property type="project" value="TreeGrafter"/>
</dbReference>
<dbReference type="GO" id="GO:0003729">
    <property type="term" value="F:mRNA binding"/>
    <property type="evidence" value="ECO:0007669"/>
    <property type="project" value="TreeGrafter"/>
</dbReference>
<dbReference type="GO" id="GO:0003735">
    <property type="term" value="F:structural constituent of ribosome"/>
    <property type="evidence" value="ECO:0007669"/>
    <property type="project" value="InterPro"/>
</dbReference>
<dbReference type="GO" id="GO:0006412">
    <property type="term" value="P:translation"/>
    <property type="evidence" value="ECO:0007669"/>
    <property type="project" value="UniProtKB-UniRule"/>
</dbReference>
<dbReference type="CDD" id="cd00387">
    <property type="entry name" value="Ribosomal_L7_L12"/>
    <property type="match status" value="1"/>
</dbReference>
<dbReference type="FunFam" id="3.30.1390.10:FF:000001">
    <property type="entry name" value="50S ribosomal protein L7/L12"/>
    <property type="match status" value="1"/>
</dbReference>
<dbReference type="Gene3D" id="3.30.1390.10">
    <property type="match status" value="1"/>
</dbReference>
<dbReference type="Gene3D" id="1.20.5.710">
    <property type="entry name" value="Single helix bin"/>
    <property type="match status" value="1"/>
</dbReference>
<dbReference type="HAMAP" id="MF_00368">
    <property type="entry name" value="Ribosomal_bL12"/>
    <property type="match status" value="1"/>
</dbReference>
<dbReference type="InterPro" id="IPR000206">
    <property type="entry name" value="Ribosomal_bL12"/>
</dbReference>
<dbReference type="InterPro" id="IPR013823">
    <property type="entry name" value="Ribosomal_bL12_C"/>
</dbReference>
<dbReference type="InterPro" id="IPR014719">
    <property type="entry name" value="Ribosomal_bL12_C/ClpS-like"/>
</dbReference>
<dbReference type="InterPro" id="IPR008932">
    <property type="entry name" value="Ribosomal_bL12_oligo"/>
</dbReference>
<dbReference type="InterPro" id="IPR036235">
    <property type="entry name" value="Ribosomal_bL12_oligo_N_sf"/>
</dbReference>
<dbReference type="NCBIfam" id="TIGR00855">
    <property type="entry name" value="L12"/>
    <property type="match status" value="1"/>
</dbReference>
<dbReference type="PANTHER" id="PTHR45987">
    <property type="entry name" value="39S RIBOSOMAL PROTEIN L12"/>
    <property type="match status" value="1"/>
</dbReference>
<dbReference type="PANTHER" id="PTHR45987:SF4">
    <property type="entry name" value="LARGE RIBOSOMAL SUBUNIT PROTEIN BL12M"/>
    <property type="match status" value="1"/>
</dbReference>
<dbReference type="Pfam" id="PF00542">
    <property type="entry name" value="Ribosomal_L12"/>
    <property type="match status" value="1"/>
</dbReference>
<dbReference type="Pfam" id="PF16320">
    <property type="entry name" value="Ribosomal_L12_N"/>
    <property type="match status" value="1"/>
</dbReference>
<dbReference type="SUPFAM" id="SSF54736">
    <property type="entry name" value="ClpS-like"/>
    <property type="match status" value="1"/>
</dbReference>
<dbReference type="SUPFAM" id="SSF48300">
    <property type="entry name" value="Ribosomal protein L7/12, oligomerisation (N-terminal) domain"/>
    <property type="match status" value="1"/>
</dbReference>
<comment type="function">
    <text evidence="1">Forms part of the ribosomal stalk which helps the ribosome interact with GTP-bound translation factors. Is thus essential for accurate translation.</text>
</comment>
<comment type="subunit">
    <text evidence="1">Homodimer. Part of the ribosomal stalk of the 50S ribosomal subunit. Forms a multimeric L10(L12)X complex, where L10 forms an elongated spine to which 2 to 4 L12 dimers bind in a sequential fashion. Binds GTP-bound translation factors.</text>
</comment>
<comment type="similarity">
    <text evidence="1">Belongs to the bacterial ribosomal protein bL12 family.</text>
</comment>
<reference key="1">
    <citation type="submission" date="2006-12" db="EMBL/GenBank/DDBJ databases">
        <title>Bifidobacterium adolescentis complete genome sequence.</title>
        <authorList>
            <person name="Suzuki T."/>
            <person name="Tsuda Y."/>
            <person name="Kanou N."/>
            <person name="Inoue T."/>
            <person name="Kumazaki K."/>
            <person name="Nagano S."/>
            <person name="Hirai S."/>
            <person name="Tanaka K."/>
            <person name="Watanabe K."/>
        </authorList>
    </citation>
    <scope>NUCLEOTIDE SEQUENCE [LARGE SCALE GENOMIC DNA]</scope>
    <source>
        <strain>ATCC 15703 / DSM 20083 / NCTC 11814 / E194a</strain>
    </source>
</reference>
<proteinExistence type="inferred from homology"/>
<evidence type="ECO:0000255" key="1">
    <source>
        <dbReference type="HAMAP-Rule" id="MF_00368"/>
    </source>
</evidence>
<evidence type="ECO:0000256" key="2">
    <source>
        <dbReference type="SAM" id="MobiDB-lite"/>
    </source>
</evidence>
<evidence type="ECO:0000305" key="3"/>
<sequence>MAKYTNDELLEAFGEMTLVELSEFVKAFEEKFDVEAAAPVAAVAAAPAAGAAAEEEKDEFDVILSAVGDKKIQVIKAVRAITNLGLAEAKALVDGAPKAVLEKAKKEDAEKAKSQLEEAGATVELK</sequence>
<gene>
    <name evidence="1" type="primary">rplL</name>
    <name type="ordered locus">BAD_0285</name>
</gene>
<name>RL7_BIFAA</name>
<organism>
    <name type="scientific">Bifidobacterium adolescentis (strain ATCC 15703 / DSM 20083 / NCTC 11814 / E194a)</name>
    <dbReference type="NCBI Taxonomy" id="367928"/>
    <lineage>
        <taxon>Bacteria</taxon>
        <taxon>Bacillati</taxon>
        <taxon>Actinomycetota</taxon>
        <taxon>Actinomycetes</taxon>
        <taxon>Bifidobacteriales</taxon>
        <taxon>Bifidobacteriaceae</taxon>
        <taxon>Bifidobacterium</taxon>
    </lineage>
</organism>
<accession>A1A033</accession>
<keyword id="KW-1185">Reference proteome</keyword>
<keyword id="KW-0687">Ribonucleoprotein</keyword>
<keyword id="KW-0689">Ribosomal protein</keyword>
<protein>
    <recommendedName>
        <fullName evidence="1">Large ribosomal subunit protein bL12</fullName>
    </recommendedName>
    <alternativeName>
        <fullName evidence="3">50S ribosomal protein L7/L12</fullName>
    </alternativeName>
</protein>